<comment type="function">
    <text evidence="1">The glycine cleavage system catalyzes the degradation of glycine. The H protein shuttles the methylamine group of glycine from the P protein to the T protein.</text>
</comment>
<comment type="cofactor">
    <cofactor evidence="1">
        <name>(R)-lipoate</name>
        <dbReference type="ChEBI" id="CHEBI:83088"/>
    </cofactor>
    <text evidence="1">Binds 1 lipoyl cofactor covalently.</text>
</comment>
<comment type="subunit">
    <text evidence="1">The glycine cleavage system is composed of four proteins: P, T, L and H.</text>
</comment>
<comment type="similarity">
    <text evidence="1">Belongs to the GcvH family.</text>
</comment>
<protein>
    <recommendedName>
        <fullName evidence="1">Glycine cleavage system H protein</fullName>
    </recommendedName>
</protein>
<feature type="chain" id="PRO_0000302396" description="Glycine cleavage system H protein">
    <location>
        <begin position="1"/>
        <end position="131"/>
    </location>
</feature>
<feature type="domain" description="Lipoyl-binding" evidence="2">
    <location>
        <begin position="24"/>
        <end position="106"/>
    </location>
</feature>
<feature type="modified residue" description="N6-lipoyllysine" evidence="1">
    <location>
        <position position="65"/>
    </location>
</feature>
<reference key="1">
    <citation type="submission" date="2006-06" db="EMBL/GenBank/DDBJ databases">
        <title>Complete sequence of chromosome of Mycobacterium sp. MCS.</title>
        <authorList>
            <consortium name="US DOE Joint Genome Institute"/>
            <person name="Copeland A."/>
            <person name="Lucas S."/>
            <person name="Lapidus A."/>
            <person name="Barry K."/>
            <person name="Detter J.C."/>
            <person name="Glavina del Rio T."/>
            <person name="Hammon N."/>
            <person name="Israni S."/>
            <person name="Dalin E."/>
            <person name="Tice H."/>
            <person name="Pitluck S."/>
            <person name="Martinez M."/>
            <person name="Schmutz J."/>
            <person name="Larimer F."/>
            <person name="Land M."/>
            <person name="Hauser L."/>
            <person name="Kyrpides N."/>
            <person name="Kim E."/>
            <person name="Miller C.D."/>
            <person name="Hughes J.E."/>
            <person name="Anderson A.J."/>
            <person name="Sims R.C."/>
            <person name="Richardson P."/>
        </authorList>
    </citation>
    <scope>NUCLEOTIDE SEQUENCE [LARGE SCALE GENOMIC DNA]</scope>
    <source>
        <strain>MCS</strain>
    </source>
</reference>
<evidence type="ECO:0000255" key="1">
    <source>
        <dbReference type="HAMAP-Rule" id="MF_00272"/>
    </source>
</evidence>
<evidence type="ECO:0000255" key="2">
    <source>
        <dbReference type="PROSITE-ProRule" id="PRU01066"/>
    </source>
</evidence>
<sequence length="131" mass="13957">MSEIPAELYYTDEHEWVLRTGDDTLRVGITDYAQAALGDVVFVQLPDVGAELTSGESFGEVESTKSVSDLYAPVSAKVLAVNGNLEASPDLVNSDPYGEGWLVDLQLDADDMEAALGGLLDADGYRGVVTE</sequence>
<accession>Q1B832</accession>
<organism>
    <name type="scientific">Mycobacterium sp. (strain MCS)</name>
    <dbReference type="NCBI Taxonomy" id="164756"/>
    <lineage>
        <taxon>Bacteria</taxon>
        <taxon>Bacillati</taxon>
        <taxon>Actinomycetota</taxon>
        <taxon>Actinomycetes</taxon>
        <taxon>Mycobacteriales</taxon>
        <taxon>Mycobacteriaceae</taxon>
        <taxon>Mycobacterium</taxon>
    </lineage>
</organism>
<proteinExistence type="inferred from homology"/>
<dbReference type="EMBL" id="CP000384">
    <property type="protein sequence ID" value="ABG08952.1"/>
    <property type="molecule type" value="Genomic_DNA"/>
</dbReference>
<dbReference type="SMR" id="Q1B832"/>
<dbReference type="KEGG" id="mmc:Mmcs_2845"/>
<dbReference type="HOGENOM" id="CLU_097408_2_2_11"/>
<dbReference type="BioCyc" id="MSP164756:G1G6O-2899-MONOMER"/>
<dbReference type="GO" id="GO:0005829">
    <property type="term" value="C:cytosol"/>
    <property type="evidence" value="ECO:0007669"/>
    <property type="project" value="TreeGrafter"/>
</dbReference>
<dbReference type="GO" id="GO:0005960">
    <property type="term" value="C:glycine cleavage complex"/>
    <property type="evidence" value="ECO:0007669"/>
    <property type="project" value="InterPro"/>
</dbReference>
<dbReference type="GO" id="GO:0019464">
    <property type="term" value="P:glycine decarboxylation via glycine cleavage system"/>
    <property type="evidence" value="ECO:0007669"/>
    <property type="project" value="UniProtKB-UniRule"/>
</dbReference>
<dbReference type="CDD" id="cd06848">
    <property type="entry name" value="GCS_H"/>
    <property type="match status" value="1"/>
</dbReference>
<dbReference type="Gene3D" id="2.40.50.100">
    <property type="match status" value="1"/>
</dbReference>
<dbReference type="HAMAP" id="MF_00272">
    <property type="entry name" value="GcvH"/>
    <property type="match status" value="1"/>
</dbReference>
<dbReference type="InterPro" id="IPR000089">
    <property type="entry name" value="Biotin_lipoyl"/>
</dbReference>
<dbReference type="InterPro" id="IPR002930">
    <property type="entry name" value="GCV_H"/>
</dbReference>
<dbReference type="InterPro" id="IPR033753">
    <property type="entry name" value="GCV_H/Fam206"/>
</dbReference>
<dbReference type="InterPro" id="IPR017453">
    <property type="entry name" value="GCV_H_sub"/>
</dbReference>
<dbReference type="InterPro" id="IPR011053">
    <property type="entry name" value="Single_hybrid_motif"/>
</dbReference>
<dbReference type="NCBIfam" id="TIGR00527">
    <property type="entry name" value="gcvH"/>
    <property type="match status" value="1"/>
</dbReference>
<dbReference type="NCBIfam" id="NF002270">
    <property type="entry name" value="PRK01202.1"/>
    <property type="match status" value="1"/>
</dbReference>
<dbReference type="PANTHER" id="PTHR11715">
    <property type="entry name" value="GLYCINE CLEAVAGE SYSTEM H PROTEIN"/>
    <property type="match status" value="1"/>
</dbReference>
<dbReference type="PANTHER" id="PTHR11715:SF3">
    <property type="entry name" value="GLYCINE CLEAVAGE SYSTEM H PROTEIN-RELATED"/>
    <property type="match status" value="1"/>
</dbReference>
<dbReference type="Pfam" id="PF01597">
    <property type="entry name" value="GCV_H"/>
    <property type="match status" value="1"/>
</dbReference>
<dbReference type="SUPFAM" id="SSF51230">
    <property type="entry name" value="Single hybrid motif"/>
    <property type="match status" value="1"/>
</dbReference>
<dbReference type="PROSITE" id="PS50968">
    <property type="entry name" value="BIOTINYL_LIPOYL"/>
    <property type="match status" value="1"/>
</dbReference>
<keyword id="KW-0450">Lipoyl</keyword>
<name>GCSH_MYCSS</name>
<gene>
    <name evidence="1" type="primary">gcvH</name>
    <name type="ordered locus">Mmcs_2845</name>
</gene>